<dbReference type="EC" id="3.4.21.-" evidence="4"/>
<dbReference type="EMBL" id="AY804127">
    <property type="protein sequence ID" value="AAV66536.2"/>
    <property type="molecule type" value="Genomic_DNA"/>
</dbReference>
<dbReference type="SMR" id="Q5RLZ1"/>
<dbReference type="MEROPS" id="S08.102"/>
<dbReference type="GeneID" id="8823543"/>
<dbReference type="OMA" id="WSADQGA"/>
<dbReference type="GO" id="GO:0005576">
    <property type="term" value="C:extracellular region"/>
    <property type="evidence" value="ECO:0007669"/>
    <property type="project" value="UniProtKB-SubCell"/>
</dbReference>
<dbReference type="GO" id="GO:0004252">
    <property type="term" value="F:serine-type endopeptidase activity"/>
    <property type="evidence" value="ECO:0007669"/>
    <property type="project" value="InterPro"/>
</dbReference>
<dbReference type="GO" id="GO:0006508">
    <property type="term" value="P:proteolysis"/>
    <property type="evidence" value="ECO:0007669"/>
    <property type="project" value="UniProtKB-KW"/>
</dbReference>
<dbReference type="Gene3D" id="2.60.120.380">
    <property type="match status" value="1"/>
</dbReference>
<dbReference type="Gene3D" id="3.40.50.200">
    <property type="entry name" value="Peptidase S8/S53 domain"/>
    <property type="match status" value="1"/>
</dbReference>
<dbReference type="InterPro" id="IPR000209">
    <property type="entry name" value="Peptidase_S8/S53_dom"/>
</dbReference>
<dbReference type="InterPro" id="IPR036852">
    <property type="entry name" value="Peptidase_S8/S53_dom_sf"/>
</dbReference>
<dbReference type="InterPro" id="IPR022398">
    <property type="entry name" value="Peptidase_S8_His-AS"/>
</dbReference>
<dbReference type="InterPro" id="IPR023828">
    <property type="entry name" value="Peptidase_S8_Ser-AS"/>
</dbReference>
<dbReference type="InterPro" id="IPR050131">
    <property type="entry name" value="Peptidase_S8_subtilisin-like"/>
</dbReference>
<dbReference type="InterPro" id="IPR015500">
    <property type="entry name" value="Peptidase_S8_subtilisin-rel"/>
</dbReference>
<dbReference type="InterPro" id="IPR006311">
    <property type="entry name" value="TAT_signal"/>
</dbReference>
<dbReference type="PANTHER" id="PTHR43806:SF11">
    <property type="entry name" value="CEREVISIN-RELATED"/>
    <property type="match status" value="1"/>
</dbReference>
<dbReference type="PANTHER" id="PTHR43806">
    <property type="entry name" value="PEPTIDASE S8"/>
    <property type="match status" value="1"/>
</dbReference>
<dbReference type="Pfam" id="PF00082">
    <property type="entry name" value="Peptidase_S8"/>
    <property type="match status" value="1"/>
</dbReference>
<dbReference type="PRINTS" id="PR00723">
    <property type="entry name" value="SUBTILISIN"/>
</dbReference>
<dbReference type="SUPFAM" id="SSF52743">
    <property type="entry name" value="Subtilisin-like"/>
    <property type="match status" value="1"/>
</dbReference>
<dbReference type="PROSITE" id="PS51892">
    <property type="entry name" value="SUBTILASE"/>
    <property type="match status" value="1"/>
</dbReference>
<dbReference type="PROSITE" id="PS00137">
    <property type="entry name" value="SUBTILASE_HIS"/>
    <property type="match status" value="1"/>
</dbReference>
<dbReference type="PROSITE" id="PS00138">
    <property type="entry name" value="SUBTILASE_SER"/>
    <property type="match status" value="1"/>
</dbReference>
<dbReference type="PROSITE" id="PS51318">
    <property type="entry name" value="TAT"/>
    <property type="match status" value="1"/>
</dbReference>
<sequence length="541" mass="56454">MTRDTNSNVGRRSVLKAASALGAFLGLGGVASATPGREPGPKKDEIIVGVSERVSSTEATVESKIPTNAEIVHTNETLGYVAVKFPSNAAEQARENFKRNVLQEDDIEYAEDNATYETLEVPNDPMYGQQYAPQQVNCEGAWAETYGDDDVVISVVDQGIQYDHENLAENMDGSVSDYGYDFVDDDGDPYPVSAGENHGTHVGGIAAGGTNNDTGHAGISNCSMLSARALGDGGGGSLSDIADAIQWSADQGADIINMSLGGGGFSETLDNACQYAYDEGTLLVAAAGNDHGGSVSYPAAYDSVMAVSSLDEGETLSSFSNVGPEIELAAPGGNVLSAVNWDDYDSLSGTSMASPVAAGVAGLALSAHPGLSNDELRDHLHDTAVDIGLSDDEQGYGRVDAELAVTTDPDNGDDDDDDDDDEDDPGDGECGDETNTATADGELSGGWGGNPSDTYSYELSTDNPCHATVTLDGPSSGATFDLFLTLDGRTPTTSDYDRRSYNWGADEEIEVDLDGDEELGILVDRYDGSGSYTLTIEELGS</sequence>
<comment type="function">
    <text evidence="4 7">Serine protease that hydrolyzes large proteins such as casein and gelatin. Cleaves preferentially at the carboxyl terminus of Phe, Tyr or Leu (PubMed:10879563). Is also able to catalyze peptide synthesis under different salt concentrations in the presence of dimethyl sulfoxide (DMSO) (PubMed:21039670).</text>
</comment>
<comment type="activity regulation">
    <text evidence="4">Dependent on high salt concentrations for activity and stability. Strongly inhibited by the serine protease inhibitors diisopropyl fluorophosphate (DFP), phenylmethyl sulfonylfluoride (PMSF) and chymostatin. Also inhibited by denaturing agents such as SDS, urea, and HCl guanidinium. Activated by thiol-containing reducing agents such as dithiotreitol (DTT) and 2-mercaptoethanol.</text>
</comment>
<comment type="biophysicochemical properties">
    <phDependence>
        <text evidence="4">Optimum pH is 8-10.</text>
    </phDependence>
    <temperatureDependence>
        <text evidence="4">Optimum temperature is 60 degrees Celsius.</text>
    </temperatureDependence>
</comment>
<comment type="subunit">
    <text evidence="9">Monomer.</text>
</comment>
<comment type="subcellular location">
    <subcellularLocation>
        <location evidence="4 5">Secreted</location>
    </subcellularLocation>
</comment>
<comment type="induction">
    <text evidence="4 6">Expressed and secreted during the transition to the stationary growth phase. Is probably up-regulated in response to factors (metabolite and/or regulatory molecule) occurring in high-density cultures.</text>
</comment>
<comment type="PTM">
    <text evidence="8">Exported by the Tat system. The position of the signal peptide cleavage has not been experimentally proven. After transport across the membrane, the propeptide is probably processed autocatalytically, yielding the mature fully active protease.</text>
</comment>
<comment type="similarity">
    <text evidence="11">Belongs to the peptidase S8 family.</text>
</comment>
<name>NEP_NATMA</name>
<feature type="signal peptide" description="Tat-type signal" evidence="1">
    <location>
        <begin position="1"/>
        <end position="33"/>
    </location>
</feature>
<feature type="propeptide" id="PRO_0000430583" evidence="5">
    <location>
        <begin position="34"/>
        <end position="121"/>
    </location>
</feature>
<feature type="chain" id="PRO_0000430584" description="Halolysin-like extracellular serine protease Nep">
    <location>
        <begin position="122"/>
        <end position="541"/>
    </location>
</feature>
<feature type="domain" description="Peptidase S8" evidence="2">
    <location>
        <begin position="130"/>
        <end position="405"/>
    </location>
</feature>
<feature type="region of interest" description="Disordered" evidence="3">
    <location>
        <begin position="403"/>
        <end position="453"/>
    </location>
</feature>
<feature type="compositionally biased region" description="Acidic residues" evidence="3">
    <location>
        <begin position="410"/>
        <end position="432"/>
    </location>
</feature>
<feature type="active site" description="Charge relay system" evidence="2">
    <location>
        <position position="157"/>
    </location>
</feature>
<feature type="active site" description="Charge relay system" evidence="2">
    <location>
        <position position="198"/>
    </location>
</feature>
<feature type="active site" description="Charge relay system" evidence="2 10">
    <location>
        <position position="351"/>
    </location>
</feature>
<feature type="mutagenesis site" description="Not secreted." evidence="8">
    <original>RR</original>
    <variation>KK</variation>
    <location>
        <begin position="11"/>
        <end position="12"/>
    </location>
</feature>
<feature type="mutagenesis site" description="Lack of protease activity." evidence="8">
    <original>S</original>
    <variation>A</variation>
    <location>
        <position position="351"/>
    </location>
</feature>
<gene>
    <name evidence="9" type="primary">nep</name>
</gene>
<organism>
    <name type="scientific">Natrialba magadii</name>
    <dbReference type="NCBI Taxonomy" id="13769"/>
    <lineage>
        <taxon>Archaea</taxon>
        <taxon>Methanobacteriati</taxon>
        <taxon>Methanobacteriota</taxon>
        <taxon>Stenosarchaea group</taxon>
        <taxon>Halobacteria</taxon>
        <taxon>Halobacteriales</taxon>
        <taxon>Natrialbaceae</taxon>
        <taxon>Natrialba</taxon>
    </lineage>
</organism>
<reference key="1">
    <citation type="journal article" date="2008" name="Extremophiles">
        <title>Gene cloning and heterologous synthesis of a haloalkaliphilic extracellular protease of Natrialba magadii (Nep).</title>
        <authorList>
            <person name="De Castro R.E."/>
            <person name="Ruiz D.M."/>
            <person name="Gimenez M.I."/>
            <person name="Silveyra M.X."/>
            <person name="Paggi R.A."/>
            <person name="Maupin-Furlow J.A."/>
        </authorList>
    </citation>
    <scope>NUCLEOTIDE SEQUENCE [GENOMIC DNA]</scope>
    <scope>PROTEIN SEQUENCE OF 122-135</scope>
    <scope>SUBUNIT</scope>
    <scope>SUBCELLULAR LOCATION</scope>
    <source>
        <strain>ATCC 43099</strain>
    </source>
</reference>
<reference key="2">
    <citation type="journal article" date="2000" name="Extremophiles">
        <title>Extracellular protease of Natrialba magadii: purification and biochemical characterization.</title>
        <authorList>
            <person name="Gimenez M.I."/>
            <person name="Studdert C.A."/>
            <person name="Sanchez J.J."/>
            <person name="De Castro R.E."/>
        </authorList>
    </citation>
    <scope>FUNCTION</scope>
    <scope>ACTIVITY REGULATION</scope>
    <scope>BIOPHYSICOCHEMICAL PROPERTIES</scope>
    <scope>SUBCELLULAR LOCATION</scope>
    <scope>INDUCTION</scope>
    <source>
        <strain>ATCC 43099</strain>
    </source>
</reference>
<reference key="3">
    <citation type="journal article" date="2010" name="Lett. Appl. Microbiol.">
        <title>Growth phase-dependent biosynthesis of Nep, a halolysin-like protease secreted by the alkaliphilic haloarchaeon Natrialba magadii.</title>
        <authorList>
            <person name="Paggi R.A."/>
            <person name="Madrid E.A."/>
            <person name="D'Alessandro C.P."/>
            <person name="Cerletti M."/>
            <person name="De Castro R.E."/>
        </authorList>
    </citation>
    <scope>INDUCTION</scope>
    <source>
        <strain>ATCC 43099</strain>
    </source>
</reference>
<reference key="4">
    <citation type="journal article" date="2010" name="Lett. Appl. Microbiol.">
        <title>Peptide synthesis catalysed by a haloalkaliphilic serine protease from the archaeon Natrialba magadii (Nep).</title>
        <authorList>
            <person name="Ruiz D.M."/>
            <person name="Iannuci N.B."/>
            <person name="Cascone O."/>
            <person name="De Castro R.E."/>
        </authorList>
    </citation>
    <scope>FUNCTION IN PEPTIDE SYNTHESIS</scope>
    <source>
        <strain>ATCC 43099</strain>
    </source>
</reference>
<reference key="5">
    <citation type="journal article" date="2012" name="J. Bacteriol.">
        <title>Autocatalytic maturation of the Tat-dependent halophilic subtilase Nep produced by the archaeon Natrialba magadii.</title>
        <authorList>
            <person name="Ruiz D.M."/>
            <person name="Paggi R.A."/>
            <person name="Gimenez M.I."/>
            <person name="De Castro R.E."/>
        </authorList>
    </citation>
    <scope>EXPORT VIA THE TAT-SYSTEM</scope>
    <scope>MUTAGENESIS OF 11-ARG-ARG-12 AND SER-351</scope>
    <source>
        <strain>ATCC 43099</strain>
    </source>
</reference>
<proteinExistence type="evidence at protein level"/>
<protein>
    <recommendedName>
        <fullName evidence="11">Halolysin-like extracellular serine protease Nep</fullName>
        <ecNumber evidence="4">3.4.21.-</ecNumber>
    </recommendedName>
    <alternativeName>
        <fullName evidence="11">Subtilisin-like protease Nep</fullName>
    </alternativeName>
</protein>
<evidence type="ECO:0000255" key="1">
    <source>
        <dbReference type="PROSITE-ProRule" id="PRU00648"/>
    </source>
</evidence>
<evidence type="ECO:0000255" key="2">
    <source>
        <dbReference type="PROSITE-ProRule" id="PRU01240"/>
    </source>
</evidence>
<evidence type="ECO:0000256" key="3">
    <source>
        <dbReference type="SAM" id="MobiDB-lite"/>
    </source>
</evidence>
<evidence type="ECO:0000269" key="4">
    <source>
    </source>
</evidence>
<evidence type="ECO:0000269" key="5">
    <source>
    </source>
</evidence>
<evidence type="ECO:0000269" key="6">
    <source>
    </source>
</evidence>
<evidence type="ECO:0000269" key="7">
    <source>
    </source>
</evidence>
<evidence type="ECO:0000269" key="8">
    <source>
    </source>
</evidence>
<evidence type="ECO:0000303" key="9">
    <source>
    </source>
</evidence>
<evidence type="ECO:0000303" key="10">
    <source>
    </source>
</evidence>
<evidence type="ECO:0000305" key="11"/>
<keyword id="KW-0903">Direct protein sequencing</keyword>
<keyword id="KW-0378">Hydrolase</keyword>
<keyword id="KW-0645">Protease</keyword>
<keyword id="KW-0964">Secreted</keyword>
<keyword id="KW-0720">Serine protease</keyword>
<keyword id="KW-0732">Signal</keyword>
<keyword id="KW-0865">Zymogen</keyword>
<accession>Q5RLZ1</accession>